<sequence>MRSSAKQEELVRAFKALLKEEKFSSQGEIVLALQDQGFENINQSKVSRMLTKFGAVRTRNAKMEMVYCLPAELGVPTTSSPLKNLVLDIDYNDAVVVIHTSPGAAQLIARLLDSLGKAEGILGTIAGDDTIFTTPASGFSVRDLYEAILELFEQEL</sequence>
<evidence type="ECO:0000255" key="1">
    <source>
        <dbReference type="HAMAP-Rule" id="MF_00173"/>
    </source>
</evidence>
<organism>
    <name type="scientific">Salmonella agona (strain SL483)</name>
    <dbReference type="NCBI Taxonomy" id="454166"/>
    <lineage>
        <taxon>Bacteria</taxon>
        <taxon>Pseudomonadati</taxon>
        <taxon>Pseudomonadota</taxon>
        <taxon>Gammaproteobacteria</taxon>
        <taxon>Enterobacterales</taxon>
        <taxon>Enterobacteriaceae</taxon>
        <taxon>Salmonella</taxon>
    </lineage>
</organism>
<dbReference type="EMBL" id="CP001138">
    <property type="protein sequence ID" value="ACH49110.1"/>
    <property type="molecule type" value="Genomic_DNA"/>
</dbReference>
<dbReference type="RefSeq" id="WP_001257852.1">
    <property type="nucleotide sequence ID" value="NC_011149.1"/>
</dbReference>
<dbReference type="SMR" id="B5F7M0"/>
<dbReference type="KEGG" id="sea:SeAg_B3551"/>
<dbReference type="HOGENOM" id="CLU_097103_2_0_6"/>
<dbReference type="UniPathway" id="UPA00068"/>
<dbReference type="Proteomes" id="UP000008819">
    <property type="component" value="Chromosome"/>
</dbReference>
<dbReference type="GO" id="GO:0005737">
    <property type="term" value="C:cytoplasm"/>
    <property type="evidence" value="ECO:0007669"/>
    <property type="project" value="UniProtKB-SubCell"/>
</dbReference>
<dbReference type="GO" id="GO:0034618">
    <property type="term" value="F:arginine binding"/>
    <property type="evidence" value="ECO:0007669"/>
    <property type="project" value="InterPro"/>
</dbReference>
<dbReference type="GO" id="GO:0003677">
    <property type="term" value="F:DNA binding"/>
    <property type="evidence" value="ECO:0007669"/>
    <property type="project" value="UniProtKB-KW"/>
</dbReference>
<dbReference type="GO" id="GO:0003700">
    <property type="term" value="F:DNA-binding transcription factor activity"/>
    <property type="evidence" value="ECO:0007669"/>
    <property type="project" value="UniProtKB-UniRule"/>
</dbReference>
<dbReference type="GO" id="GO:0006526">
    <property type="term" value="P:L-arginine biosynthetic process"/>
    <property type="evidence" value="ECO:0007669"/>
    <property type="project" value="UniProtKB-UniPathway"/>
</dbReference>
<dbReference type="GO" id="GO:0051259">
    <property type="term" value="P:protein complex oligomerization"/>
    <property type="evidence" value="ECO:0007669"/>
    <property type="project" value="InterPro"/>
</dbReference>
<dbReference type="GO" id="GO:1900079">
    <property type="term" value="P:regulation of arginine biosynthetic process"/>
    <property type="evidence" value="ECO:0007669"/>
    <property type="project" value="UniProtKB-UniRule"/>
</dbReference>
<dbReference type="FunFam" id="1.10.10.10:FF:000074">
    <property type="entry name" value="Arginine repressor"/>
    <property type="match status" value="1"/>
</dbReference>
<dbReference type="FunFam" id="3.30.1360.40:FF:000004">
    <property type="entry name" value="Arginine repressor"/>
    <property type="match status" value="1"/>
</dbReference>
<dbReference type="Gene3D" id="3.30.1360.40">
    <property type="match status" value="1"/>
</dbReference>
<dbReference type="Gene3D" id="1.10.10.10">
    <property type="entry name" value="Winged helix-like DNA-binding domain superfamily/Winged helix DNA-binding domain"/>
    <property type="match status" value="1"/>
</dbReference>
<dbReference type="HAMAP" id="MF_00173">
    <property type="entry name" value="Arg_repressor"/>
    <property type="match status" value="1"/>
</dbReference>
<dbReference type="InterPro" id="IPR001669">
    <property type="entry name" value="Arg_repress"/>
</dbReference>
<dbReference type="InterPro" id="IPR020899">
    <property type="entry name" value="Arg_repress_C"/>
</dbReference>
<dbReference type="InterPro" id="IPR036251">
    <property type="entry name" value="Arg_repress_C_sf"/>
</dbReference>
<dbReference type="InterPro" id="IPR020900">
    <property type="entry name" value="Arg_repress_DNA-bd"/>
</dbReference>
<dbReference type="InterPro" id="IPR036388">
    <property type="entry name" value="WH-like_DNA-bd_sf"/>
</dbReference>
<dbReference type="InterPro" id="IPR036390">
    <property type="entry name" value="WH_DNA-bd_sf"/>
</dbReference>
<dbReference type="NCBIfam" id="TIGR01529">
    <property type="entry name" value="argR_whole"/>
    <property type="match status" value="1"/>
</dbReference>
<dbReference type="NCBIfam" id="NF003457">
    <property type="entry name" value="PRK05066.1"/>
    <property type="match status" value="1"/>
</dbReference>
<dbReference type="PANTHER" id="PTHR34471">
    <property type="entry name" value="ARGININE REPRESSOR"/>
    <property type="match status" value="1"/>
</dbReference>
<dbReference type="PANTHER" id="PTHR34471:SF1">
    <property type="entry name" value="ARGININE REPRESSOR"/>
    <property type="match status" value="1"/>
</dbReference>
<dbReference type="Pfam" id="PF01316">
    <property type="entry name" value="Arg_repressor"/>
    <property type="match status" value="1"/>
</dbReference>
<dbReference type="Pfam" id="PF02863">
    <property type="entry name" value="Arg_repressor_C"/>
    <property type="match status" value="1"/>
</dbReference>
<dbReference type="PRINTS" id="PR01467">
    <property type="entry name" value="ARGREPRESSOR"/>
</dbReference>
<dbReference type="SUPFAM" id="SSF55252">
    <property type="entry name" value="C-terminal domain of arginine repressor"/>
    <property type="match status" value="1"/>
</dbReference>
<dbReference type="SUPFAM" id="SSF46785">
    <property type="entry name" value="Winged helix' DNA-binding domain"/>
    <property type="match status" value="1"/>
</dbReference>
<accession>B5F7M0</accession>
<proteinExistence type="inferred from homology"/>
<gene>
    <name evidence="1" type="primary">argR</name>
    <name type="ordered locus">SeAg_B3551</name>
</gene>
<comment type="function">
    <text evidence="1">Regulates arginine biosynthesis genes.</text>
</comment>
<comment type="pathway">
    <text>Amino-acid biosynthesis; L-arginine biosynthesis [regulation].</text>
</comment>
<comment type="subcellular location">
    <subcellularLocation>
        <location evidence="1">Cytoplasm</location>
    </subcellularLocation>
</comment>
<comment type="similarity">
    <text evidence="1">Belongs to the ArgR family.</text>
</comment>
<feature type="chain" id="PRO_1000097880" description="Arginine repressor">
    <location>
        <begin position="1"/>
        <end position="156"/>
    </location>
</feature>
<reference key="1">
    <citation type="journal article" date="2011" name="J. Bacteriol.">
        <title>Comparative genomics of 28 Salmonella enterica isolates: evidence for CRISPR-mediated adaptive sublineage evolution.</title>
        <authorList>
            <person name="Fricke W.F."/>
            <person name="Mammel M.K."/>
            <person name="McDermott P.F."/>
            <person name="Tartera C."/>
            <person name="White D.G."/>
            <person name="Leclerc J.E."/>
            <person name="Ravel J."/>
            <person name="Cebula T.A."/>
        </authorList>
    </citation>
    <scope>NUCLEOTIDE SEQUENCE [LARGE SCALE GENOMIC DNA]</scope>
    <source>
        <strain>SL483</strain>
    </source>
</reference>
<keyword id="KW-0028">Amino-acid biosynthesis</keyword>
<keyword id="KW-0055">Arginine biosynthesis</keyword>
<keyword id="KW-0963">Cytoplasm</keyword>
<keyword id="KW-0238">DNA-binding</keyword>
<keyword id="KW-0678">Repressor</keyword>
<keyword id="KW-0804">Transcription</keyword>
<keyword id="KW-0805">Transcription regulation</keyword>
<name>ARGR_SALA4</name>
<protein>
    <recommendedName>
        <fullName evidence="1">Arginine repressor</fullName>
    </recommendedName>
</protein>